<organism>
    <name type="scientific">Prochlorococcus marinus (strain NATL2A)</name>
    <dbReference type="NCBI Taxonomy" id="59920"/>
    <lineage>
        <taxon>Bacteria</taxon>
        <taxon>Bacillati</taxon>
        <taxon>Cyanobacteriota</taxon>
        <taxon>Cyanophyceae</taxon>
        <taxon>Synechococcales</taxon>
        <taxon>Prochlorococcaceae</taxon>
        <taxon>Prochlorococcus</taxon>
    </lineage>
</organism>
<name>RL16_PROMT</name>
<evidence type="ECO:0000255" key="1">
    <source>
        <dbReference type="HAMAP-Rule" id="MF_01342"/>
    </source>
</evidence>
<evidence type="ECO:0000256" key="2">
    <source>
        <dbReference type="SAM" id="MobiDB-lite"/>
    </source>
</evidence>
<evidence type="ECO:0000305" key="3"/>
<protein>
    <recommendedName>
        <fullName evidence="1">Large ribosomal subunit protein uL16</fullName>
    </recommendedName>
    <alternativeName>
        <fullName evidence="3">50S ribosomal protein L16</fullName>
    </alternativeName>
</protein>
<dbReference type="EMBL" id="CP000095">
    <property type="protein sequence ID" value="AAZ58612.1"/>
    <property type="molecule type" value="Genomic_DNA"/>
</dbReference>
<dbReference type="RefSeq" id="WP_011295466.1">
    <property type="nucleotide sequence ID" value="NC_007335.2"/>
</dbReference>
<dbReference type="SMR" id="Q46IR6"/>
<dbReference type="STRING" id="59920.PMN2A_1122"/>
<dbReference type="KEGG" id="pmn:PMN2A_1122"/>
<dbReference type="HOGENOM" id="CLU_078858_2_1_3"/>
<dbReference type="OrthoDB" id="9802589at2"/>
<dbReference type="PhylomeDB" id="Q46IR6"/>
<dbReference type="Proteomes" id="UP000002535">
    <property type="component" value="Chromosome"/>
</dbReference>
<dbReference type="GO" id="GO:1990904">
    <property type="term" value="C:ribonucleoprotein complex"/>
    <property type="evidence" value="ECO:0007669"/>
    <property type="project" value="UniProtKB-KW"/>
</dbReference>
<dbReference type="GO" id="GO:0005840">
    <property type="term" value="C:ribosome"/>
    <property type="evidence" value="ECO:0007669"/>
    <property type="project" value="UniProtKB-KW"/>
</dbReference>
<dbReference type="GO" id="GO:0019843">
    <property type="term" value="F:rRNA binding"/>
    <property type="evidence" value="ECO:0007669"/>
    <property type="project" value="UniProtKB-UniRule"/>
</dbReference>
<dbReference type="GO" id="GO:0003735">
    <property type="term" value="F:structural constituent of ribosome"/>
    <property type="evidence" value="ECO:0007669"/>
    <property type="project" value="InterPro"/>
</dbReference>
<dbReference type="GO" id="GO:0000049">
    <property type="term" value="F:tRNA binding"/>
    <property type="evidence" value="ECO:0007669"/>
    <property type="project" value="UniProtKB-KW"/>
</dbReference>
<dbReference type="GO" id="GO:0006412">
    <property type="term" value="P:translation"/>
    <property type="evidence" value="ECO:0007669"/>
    <property type="project" value="UniProtKB-UniRule"/>
</dbReference>
<dbReference type="CDD" id="cd01433">
    <property type="entry name" value="Ribosomal_L16_L10e"/>
    <property type="match status" value="1"/>
</dbReference>
<dbReference type="FunFam" id="3.90.1170.10:FF:000001">
    <property type="entry name" value="50S ribosomal protein L16"/>
    <property type="match status" value="1"/>
</dbReference>
<dbReference type="Gene3D" id="3.90.1170.10">
    <property type="entry name" value="Ribosomal protein L10e/L16"/>
    <property type="match status" value="1"/>
</dbReference>
<dbReference type="HAMAP" id="MF_01342">
    <property type="entry name" value="Ribosomal_uL16"/>
    <property type="match status" value="1"/>
</dbReference>
<dbReference type="InterPro" id="IPR047873">
    <property type="entry name" value="Ribosomal_uL16"/>
</dbReference>
<dbReference type="InterPro" id="IPR000114">
    <property type="entry name" value="Ribosomal_uL16_bact-type"/>
</dbReference>
<dbReference type="InterPro" id="IPR020798">
    <property type="entry name" value="Ribosomal_uL16_CS"/>
</dbReference>
<dbReference type="InterPro" id="IPR016180">
    <property type="entry name" value="Ribosomal_uL16_dom"/>
</dbReference>
<dbReference type="InterPro" id="IPR036920">
    <property type="entry name" value="Ribosomal_uL16_sf"/>
</dbReference>
<dbReference type="NCBIfam" id="TIGR01164">
    <property type="entry name" value="rplP_bact"/>
    <property type="match status" value="1"/>
</dbReference>
<dbReference type="PANTHER" id="PTHR12220">
    <property type="entry name" value="50S/60S RIBOSOMAL PROTEIN L16"/>
    <property type="match status" value="1"/>
</dbReference>
<dbReference type="PANTHER" id="PTHR12220:SF13">
    <property type="entry name" value="LARGE RIBOSOMAL SUBUNIT PROTEIN UL16M"/>
    <property type="match status" value="1"/>
</dbReference>
<dbReference type="Pfam" id="PF00252">
    <property type="entry name" value="Ribosomal_L16"/>
    <property type="match status" value="1"/>
</dbReference>
<dbReference type="PRINTS" id="PR00060">
    <property type="entry name" value="RIBOSOMALL16"/>
</dbReference>
<dbReference type="SUPFAM" id="SSF54686">
    <property type="entry name" value="Ribosomal protein L16p/L10e"/>
    <property type="match status" value="1"/>
</dbReference>
<dbReference type="PROSITE" id="PS00586">
    <property type="entry name" value="RIBOSOMAL_L16_1"/>
    <property type="match status" value="1"/>
</dbReference>
<dbReference type="PROSITE" id="PS00701">
    <property type="entry name" value="RIBOSOMAL_L16_2"/>
    <property type="match status" value="1"/>
</dbReference>
<feature type="chain" id="PRO_0000062169" description="Large ribosomal subunit protein uL16">
    <location>
        <begin position="1"/>
        <end position="161"/>
    </location>
</feature>
<feature type="region of interest" description="Disordered" evidence="2">
    <location>
        <begin position="140"/>
        <end position="161"/>
    </location>
</feature>
<reference key="1">
    <citation type="journal article" date="2007" name="PLoS Genet.">
        <title>Patterns and implications of gene gain and loss in the evolution of Prochlorococcus.</title>
        <authorList>
            <person name="Kettler G.C."/>
            <person name="Martiny A.C."/>
            <person name="Huang K."/>
            <person name="Zucker J."/>
            <person name="Coleman M.L."/>
            <person name="Rodrigue S."/>
            <person name="Chen F."/>
            <person name="Lapidus A."/>
            <person name="Ferriera S."/>
            <person name="Johnson J."/>
            <person name="Steglich C."/>
            <person name="Church G.M."/>
            <person name="Richardson P."/>
            <person name="Chisholm S.W."/>
        </authorList>
    </citation>
    <scope>NUCLEOTIDE SEQUENCE [LARGE SCALE GENOMIC DNA]</scope>
    <source>
        <strain>NATL2A</strain>
    </source>
</reference>
<keyword id="KW-1185">Reference proteome</keyword>
<keyword id="KW-0687">Ribonucleoprotein</keyword>
<keyword id="KW-0689">Ribosomal protein</keyword>
<keyword id="KW-0694">RNA-binding</keyword>
<keyword id="KW-0699">rRNA-binding</keyword>
<keyword id="KW-0820">tRNA-binding</keyword>
<sequence>MLSPKRTKFRKQQRGRMRGVATRGNKIAFGQFALQAQDCGWVTSRQIEASRRAMTRYVKRGGQIWIRIFPDKPVTMRPAETRMGSGKGNPEFWVAVVKPGRILFEMGGDEITEAIAKEAMRLAQYKLPVKTKFISLDEDLNKGNYKPAKTPVTADDSESSS</sequence>
<comment type="function">
    <text evidence="1">Binds 23S rRNA and is also seen to make contacts with the A and possibly P site tRNAs.</text>
</comment>
<comment type="subunit">
    <text evidence="1">Part of the 50S ribosomal subunit.</text>
</comment>
<comment type="similarity">
    <text evidence="1">Belongs to the universal ribosomal protein uL16 family.</text>
</comment>
<proteinExistence type="inferred from homology"/>
<gene>
    <name evidence="1" type="primary">rplP</name>
    <name evidence="1" type="synonym">rpl16</name>
    <name type="ordered locus">PMN2A_1122</name>
</gene>
<accession>Q46IR6</accession>